<gene>
    <name type="ordered locus">Ken-080</name>
</gene>
<accession>P0CAD5</accession>
<evidence type="ECO:0000250" key="1">
    <source>
        <dbReference type="UniProtKB" id="Q65160"/>
    </source>
</evidence>
<evidence type="ECO:0000305" key="2"/>
<sequence length="316" mass="36860">MDALLKEIEKLSQPSSLQKENNDVCDLCFMQMKKISNYQLLCEECGQLKDWFEPDYNEKFTVYSRLKIVGANSSYHQRDLDKANSSDYSSLQFHHILEELKSLNVKYMDAGQKPFPIQVLKETAHSYNQVQQHRVIRSITKLQILASILRSICLKLNIACTVADAARFTQLNTKGISRGMDLLRSLFEDNKITLNVDLNPIDSFINSTYSALQIKQIHQELQEENVYNLKEIVKSFIVYADEKNIGVDLNRRTVVIATMYNVLRRAYYPIEIDTVVYQCKIRKNTITRALKMYEDYYSHFKSLYEQYQLNAAKKLI</sequence>
<protein>
    <recommendedName>
        <fullName evidence="1">Initiation factor TFIIB homolog</fullName>
        <shortName>pC315R</shortName>
    </recommendedName>
</protein>
<organismHost>
    <name type="scientific">Ornithodoros</name>
    <name type="common">relapsing fever ticks</name>
    <dbReference type="NCBI Taxonomy" id="6937"/>
</organismHost>
<organismHost>
    <name type="scientific">Phacochoerus aethiopicus</name>
    <name type="common">Warthog</name>
    <dbReference type="NCBI Taxonomy" id="85517"/>
</organismHost>
<organismHost>
    <name type="scientific">Phacochoerus africanus</name>
    <name type="common">Warthog</name>
    <dbReference type="NCBI Taxonomy" id="41426"/>
</organismHost>
<organismHost>
    <name type="scientific">Potamochoerus larvatus</name>
    <name type="common">Bushpig</name>
    <dbReference type="NCBI Taxonomy" id="273792"/>
</organismHost>
<organismHost>
    <name type="scientific">Sus scrofa</name>
    <name type="common">Pig</name>
    <dbReference type="NCBI Taxonomy" id="9823"/>
</organismHost>
<reference key="1">
    <citation type="submission" date="2003-03" db="EMBL/GenBank/DDBJ databases">
        <title>African swine fever virus genomes.</title>
        <authorList>
            <person name="Kutish G.F."/>
            <person name="Rock D.L."/>
        </authorList>
    </citation>
    <scope>NUCLEOTIDE SEQUENCE [LARGE SCALE GENOMIC DNA]</scope>
</reference>
<comment type="function">
    <text evidence="1">Putative initation factor.</text>
</comment>
<comment type="similarity">
    <text evidence="2">Belongs to the asfivirus C315R family.</text>
</comment>
<name>TFIIB_ASFK5</name>
<proteinExistence type="inferred from homology"/>
<organism>
    <name type="scientific">African swine fever virus (isolate Pig/Kenya/KEN-50/1950)</name>
    <name type="common">ASFV</name>
    <dbReference type="NCBI Taxonomy" id="561445"/>
    <lineage>
        <taxon>Viruses</taxon>
        <taxon>Varidnaviria</taxon>
        <taxon>Bamfordvirae</taxon>
        <taxon>Nucleocytoviricota</taxon>
        <taxon>Pokkesviricetes</taxon>
        <taxon>Asfuvirales</taxon>
        <taxon>Asfarviridae</taxon>
        <taxon>Asfivirus</taxon>
        <taxon>African swine fever virus</taxon>
    </lineage>
</organism>
<dbReference type="EMBL" id="AY261360">
    <property type="status" value="NOT_ANNOTATED_CDS"/>
    <property type="molecule type" value="Genomic_DNA"/>
</dbReference>
<dbReference type="SMR" id="P0CAD5"/>
<dbReference type="Proteomes" id="UP000000861">
    <property type="component" value="Segment"/>
</dbReference>
<feature type="chain" id="PRO_0000373640" description="Initiation factor TFIIB homolog">
    <location>
        <begin position="1"/>
        <end position="316"/>
    </location>
</feature>